<comment type="subcellular location">
    <subcellularLocation>
        <location evidence="3">Membrane</location>
        <topology evidence="3">Single-pass type I membrane protein</topology>
    </subcellularLocation>
</comment>
<comment type="similarity">
    <text evidence="3">Belongs to the LRRC37A family.</text>
</comment>
<comment type="sequence caution" evidence="3">
    <conflict type="erroneous initiation">
        <sequence resource="EMBL-CDS" id="BAA25489"/>
    </conflict>
</comment>
<comment type="sequence caution" evidence="3">
    <conflict type="erroneous initiation">
        <sequence resource="EMBL-CDS" id="BAC03710"/>
    </conflict>
</comment>
<accession>O60309</accession>
<accession>Q49A01</accession>
<accession>Q49A80</accession>
<accession>Q8NB33</accession>
<evidence type="ECO:0000255" key="1"/>
<evidence type="ECO:0000256" key="2">
    <source>
        <dbReference type="SAM" id="MobiDB-lite"/>
    </source>
</evidence>
<evidence type="ECO:0000305" key="3"/>
<organism>
    <name type="scientific">Homo sapiens</name>
    <name type="common">Human</name>
    <dbReference type="NCBI Taxonomy" id="9606"/>
    <lineage>
        <taxon>Eukaryota</taxon>
        <taxon>Metazoa</taxon>
        <taxon>Chordata</taxon>
        <taxon>Craniata</taxon>
        <taxon>Vertebrata</taxon>
        <taxon>Euteleostomi</taxon>
        <taxon>Mammalia</taxon>
        <taxon>Eutheria</taxon>
        <taxon>Euarchontoglires</taxon>
        <taxon>Primates</taxon>
        <taxon>Haplorrhini</taxon>
        <taxon>Catarrhini</taxon>
        <taxon>Hominidae</taxon>
        <taxon>Homo</taxon>
    </lineage>
</organism>
<name>L37A3_HUMAN</name>
<dbReference type="EMBL" id="AB011135">
    <property type="protein sequence ID" value="BAA25489.3"/>
    <property type="status" value="ALT_INIT"/>
    <property type="molecule type" value="mRNA"/>
</dbReference>
<dbReference type="EMBL" id="BC043145">
    <property type="protein sequence ID" value="AAH43145.1"/>
    <property type="molecule type" value="mRNA"/>
</dbReference>
<dbReference type="EMBL" id="AK091625">
    <property type="protein sequence ID" value="BAC03710.1"/>
    <property type="status" value="ALT_INIT"/>
    <property type="molecule type" value="mRNA"/>
</dbReference>
<dbReference type="CCDS" id="CCDS32708.1"/>
<dbReference type="RefSeq" id="NP_955372.2">
    <property type="nucleotide sequence ID" value="NM_199340.3"/>
</dbReference>
<dbReference type="SMR" id="O60309"/>
<dbReference type="BioGRID" id="131922">
    <property type="interactions" value="5"/>
</dbReference>
<dbReference type="FunCoup" id="O60309">
    <property type="interactions" value="19"/>
</dbReference>
<dbReference type="STRING" id="9606.ENSP00000464535"/>
<dbReference type="GlyCosmos" id="O60309">
    <property type="glycosylation" value="2 sites, No reported glycans"/>
</dbReference>
<dbReference type="GlyGen" id="O60309">
    <property type="glycosylation" value="9 sites, 2 O-linked glycans (5 sites)"/>
</dbReference>
<dbReference type="iPTMnet" id="O60309"/>
<dbReference type="PhosphoSitePlus" id="O60309"/>
<dbReference type="BioMuta" id="LRRC37A3"/>
<dbReference type="jPOST" id="O60309"/>
<dbReference type="MassIVE" id="O60309"/>
<dbReference type="PaxDb" id="9606-ENSP00000464535"/>
<dbReference type="PeptideAtlas" id="O60309"/>
<dbReference type="ProteomicsDB" id="49338"/>
<dbReference type="Antibodypedia" id="45816">
    <property type="antibodies" value="24 antibodies from 11 providers"/>
</dbReference>
<dbReference type="DNASU" id="374819"/>
<dbReference type="Ensembl" id="ENST00000319651.9">
    <property type="protein sequence ID" value="ENSP00000325713.5"/>
    <property type="gene ID" value="ENSG00000176809.11"/>
</dbReference>
<dbReference type="Ensembl" id="ENST00000584306.6">
    <property type="protein sequence ID" value="ENSP00000464535.1"/>
    <property type="gene ID" value="ENSG00000176809.11"/>
</dbReference>
<dbReference type="GeneID" id="374819"/>
<dbReference type="KEGG" id="hsa:374819"/>
<dbReference type="MANE-Select" id="ENST00000584306.6">
    <property type="protein sequence ID" value="ENSP00000464535.1"/>
    <property type="RefSeq nucleotide sequence ID" value="NM_199340.5"/>
    <property type="RefSeq protein sequence ID" value="NP_955372.2"/>
</dbReference>
<dbReference type="UCSC" id="uc002jey.3">
    <property type="organism name" value="human"/>
</dbReference>
<dbReference type="AGR" id="HGNC:32427"/>
<dbReference type="CTD" id="374819"/>
<dbReference type="DisGeNET" id="374819"/>
<dbReference type="GeneCards" id="LRRC37A3"/>
<dbReference type="HGNC" id="HGNC:32427">
    <property type="gene designation" value="LRRC37A3"/>
</dbReference>
<dbReference type="HPA" id="ENSG00000176809">
    <property type="expression patterns" value="Tissue enhanced (testis)"/>
</dbReference>
<dbReference type="MIM" id="616557">
    <property type="type" value="gene"/>
</dbReference>
<dbReference type="neXtProt" id="NX_O60309"/>
<dbReference type="OpenTargets" id="ENSG00000176809"/>
<dbReference type="PharmGKB" id="PA162394563"/>
<dbReference type="VEuPathDB" id="HostDB:ENSG00000176809"/>
<dbReference type="eggNOG" id="KOG0619">
    <property type="taxonomic scope" value="Eukaryota"/>
</dbReference>
<dbReference type="GeneTree" id="ENSGT00530000063282"/>
<dbReference type="HOGENOM" id="CLU_003362_0_0_1"/>
<dbReference type="InParanoid" id="O60309"/>
<dbReference type="OrthoDB" id="9537879at2759"/>
<dbReference type="PAN-GO" id="O60309">
    <property type="GO annotations" value="0 GO annotations based on evolutionary models"/>
</dbReference>
<dbReference type="PhylomeDB" id="O60309"/>
<dbReference type="TreeFam" id="TF341959"/>
<dbReference type="PathwayCommons" id="O60309"/>
<dbReference type="BioGRID-ORCS" id="374819">
    <property type="hits" value="395 hits in 1075 CRISPR screens"/>
</dbReference>
<dbReference type="ChiTaRS" id="LRRC37A3">
    <property type="organism name" value="human"/>
</dbReference>
<dbReference type="GenomeRNAi" id="374819"/>
<dbReference type="Pharos" id="O60309">
    <property type="development level" value="Tdark"/>
</dbReference>
<dbReference type="PRO" id="PR:O60309"/>
<dbReference type="Proteomes" id="UP000005640">
    <property type="component" value="Chromosome 17"/>
</dbReference>
<dbReference type="RNAct" id="O60309">
    <property type="molecule type" value="protein"/>
</dbReference>
<dbReference type="Bgee" id="ENSG00000176809">
    <property type="expression patterns" value="Expressed in right uterine tube and 151 other cell types or tissues"/>
</dbReference>
<dbReference type="ExpressionAtlas" id="O60309">
    <property type="expression patterns" value="baseline and differential"/>
</dbReference>
<dbReference type="GO" id="GO:0016020">
    <property type="term" value="C:membrane"/>
    <property type="evidence" value="ECO:0007669"/>
    <property type="project" value="UniProtKB-SubCell"/>
</dbReference>
<dbReference type="Gene3D" id="3.80.10.10">
    <property type="entry name" value="Ribonuclease Inhibitor"/>
    <property type="match status" value="1"/>
</dbReference>
<dbReference type="InterPro" id="IPR001611">
    <property type="entry name" value="Leu-rich_rpt"/>
</dbReference>
<dbReference type="InterPro" id="IPR003591">
    <property type="entry name" value="Leu-rich_rpt_typical-subtyp"/>
</dbReference>
<dbReference type="InterPro" id="IPR032675">
    <property type="entry name" value="LRR_dom_sf"/>
</dbReference>
<dbReference type="InterPro" id="IPR015753">
    <property type="entry name" value="LRRC37"/>
</dbReference>
<dbReference type="InterPro" id="IPR032754">
    <property type="entry name" value="LRRC37_N"/>
</dbReference>
<dbReference type="InterPro" id="IPR029423">
    <property type="entry name" value="LRRC37AB_C"/>
</dbReference>
<dbReference type="PANTHER" id="PTHR23045">
    <property type="entry name" value="LEUCINE-RICH REPEAT-CONTAINING PROTEIN 37A"/>
    <property type="match status" value="1"/>
</dbReference>
<dbReference type="PANTHER" id="PTHR23045:SF19">
    <property type="entry name" value="LEUCINE-RICH REPEAT-CONTAINING PROTEIN 37A-RELATED"/>
    <property type="match status" value="1"/>
</dbReference>
<dbReference type="Pfam" id="PF13855">
    <property type="entry name" value="LRR_8"/>
    <property type="match status" value="1"/>
</dbReference>
<dbReference type="Pfam" id="PF15779">
    <property type="entry name" value="LRRC37"/>
    <property type="match status" value="6"/>
</dbReference>
<dbReference type="Pfam" id="PF14914">
    <property type="entry name" value="LRRC37AB_C"/>
    <property type="match status" value="1"/>
</dbReference>
<dbReference type="SMART" id="SM00369">
    <property type="entry name" value="LRR_TYP"/>
    <property type="match status" value="4"/>
</dbReference>
<dbReference type="SUPFAM" id="SSF52058">
    <property type="entry name" value="L domain-like"/>
    <property type="match status" value="1"/>
</dbReference>
<dbReference type="PROSITE" id="PS51450">
    <property type="entry name" value="LRR"/>
    <property type="match status" value="4"/>
</dbReference>
<sequence length="1634" mass="180621">MTSAQCPALACVMSPLRFWGPWPLLMWQLLWLLVKEAQPLEWVKDPLQLTSNPLGPPEPWSSHSSHFPRESPHAPTLPADPWDFDHLGPSASSEMPAPPQESTENLVPFLDTWDSAGELPLEPEQFLASQQDLKDKLSPQERLPVSPKKLKKDPAQRWSLAEIIGIIHQLSTPQSQKQTLQNEYSSTDTPYPGSLPPELRVKSDEPPGPSEQVGPSQFHLEPETQNPETLEDIQSSSLQQEAPAQLPQLLEEEPSSMQQEAPALPPESSMESLTLPNHEVSVQPPGEDQAYYHLPNITVKPADVEVTITSEPTNETESSQAQQETPIQFPEEVEPSATQQEAPIEPPVPPMEHELSISEQQQPVQPSESSREVESSPTQQETPGQPPEHHEVTVSPPGHHQTHHLASPSVSVKPPDVQLTIAAEPSAEVGTSLVHQEATTRLSGSGNDVEPPAIQHGGPPLLPESSEEAGPLAVQQETSFQSPEPINNENPSPTQQEAAAEHPQTAEEGESSLTHQEAPAQTPEFPNVVVAQPPEHSHLTQATVQPLDLGFTITPESMTEVELSPTMKETPTQPPKKVVPQLRVYQGVTNPTPGQDQAQHPVSPSVTVQLLDLGLTITPEPTTEVGHSTPPKRTIVSPKHPEVTLPHPDQVQTQHSHLTRATVQPLDLGFTITPKSMTEVEPSTALMTTAPPPGHPEVTLPPSDKGQAQHSHLTQATVQPLDLELTITTKPTTEVKPSPTTEETSTQLPDLGLAIIPEPTTETGHSTALEKTTAPRPDRVQTLHRSLTEVTGPPTELEPAQDSLVQSESYTQNKALTAPEEHKASTSTNICELCTCGDEMLSCIDLNPEQRLRQVPVPEPNTHNGTFTILNFQGNYISYIDGNVWKAYSWTEKLILRENNLTELHKDSFEGLLSLQYLDLSCNKIQSIERHTFEPLPFLKFINLSCNVITELSFGTFQAWHGMQFLHKLILNHNPLTTVEDPYLFKLPALKYLDMGTTLVPLTTLKNILMMTVELEKLIVPSHMACCLCQFKNSIEAVCKTVKLHCNSACLTNTTHCPEEASVGNPEGAFMKVLQARKNYTSTELIIEPEEPSDSSGINLSGFGSEQLDTNDESDVTSTLSYILPYFSAVNLDVKSLLLPFIKLPTTGNSLAKIQTVGKNRQRLNRVLMGPRSIQKRHFKEVGRQSIRREQGAQASVENTAEEKRLGSPAPRELKQPHTQQGPEKLAGNAVYTKPSFTQEHKAAVSVLKPFSKGAPSTSSPAKALPQVRDRWKDLTHAISILESAKARVTNMKTSKPIVHSRKKYRFHKTRSRMTHRTPKVKKSPKVRKKSYLSRLMLSNRLPFSAAKSLINSPSQGAFSSLRDLSPQENPFLEVSAPSEHFIENNNTKDTTARNAFEENVFMENTNMPEGTISENTNYNHPPEADSAGTAFNLGPTVKQTETKWEYNNVGTDLSPEPKSFNYPLLSSPGDQFEIQLTQQLQSVIPNNNVRRLIAHVIRTLKMDCSGAHVQVTCAKLVSRTGHLMKLLSGQQEVKASKIEWDTDQWKTENYINESTEAQSEQKEKSLEFTKELPGYGYTKKLILALIVTGILTILIILLCLIEICCHRRSLQEDEEGFSRDSEAPTEEESEALP</sequence>
<keyword id="KW-0325">Glycoprotein</keyword>
<keyword id="KW-0433">Leucine-rich repeat</keyword>
<keyword id="KW-0472">Membrane</keyword>
<keyword id="KW-1267">Proteomics identification</keyword>
<keyword id="KW-1185">Reference proteome</keyword>
<keyword id="KW-0677">Repeat</keyword>
<keyword id="KW-0732">Signal</keyword>
<keyword id="KW-0812">Transmembrane</keyword>
<keyword id="KW-1133">Transmembrane helix</keyword>
<reference key="1">
    <citation type="journal article" date="1998" name="DNA Res.">
        <title>Prediction of the coding sequences of unidentified human genes. IX. The complete sequences of 100 new cDNA clones from brain which can code for large proteins in vitro.</title>
        <authorList>
            <person name="Nagase T."/>
            <person name="Ishikawa K."/>
            <person name="Miyajima N."/>
            <person name="Tanaka A."/>
            <person name="Kotani H."/>
            <person name="Nomura N."/>
            <person name="Ohara O."/>
        </authorList>
    </citation>
    <scope>NUCLEOTIDE SEQUENCE [LARGE SCALE MRNA]</scope>
    <source>
        <tissue>Brain</tissue>
    </source>
</reference>
<reference key="2">
    <citation type="submission" date="2005-08" db="EMBL/GenBank/DDBJ databases">
        <authorList>
            <person name="Ohara O."/>
            <person name="Nagase T."/>
            <person name="Kikuno R."/>
            <person name="Ishikawa K."/>
        </authorList>
    </citation>
    <scope>SEQUENCE REVISION</scope>
</reference>
<reference key="3">
    <citation type="journal article" date="2004" name="Genome Res.">
        <title>The status, quality, and expansion of the NIH full-length cDNA project: the Mammalian Gene Collection (MGC).</title>
        <authorList>
            <consortium name="The MGC Project Team"/>
        </authorList>
    </citation>
    <scope>NUCLEOTIDE SEQUENCE [LARGE SCALE MRNA]</scope>
    <source>
        <tissue>Testis</tissue>
    </source>
</reference>
<reference key="4">
    <citation type="journal article" date="2004" name="Nat. Genet.">
        <title>Complete sequencing and characterization of 21,243 full-length human cDNAs.</title>
        <authorList>
            <person name="Ota T."/>
            <person name="Suzuki Y."/>
            <person name="Nishikawa T."/>
            <person name="Otsuki T."/>
            <person name="Sugiyama T."/>
            <person name="Irie R."/>
            <person name="Wakamatsu A."/>
            <person name="Hayashi K."/>
            <person name="Sato H."/>
            <person name="Nagai K."/>
            <person name="Kimura K."/>
            <person name="Makita H."/>
            <person name="Sekine M."/>
            <person name="Obayashi M."/>
            <person name="Nishi T."/>
            <person name="Shibahara T."/>
            <person name="Tanaka T."/>
            <person name="Ishii S."/>
            <person name="Yamamoto J."/>
            <person name="Saito K."/>
            <person name="Kawai Y."/>
            <person name="Isono Y."/>
            <person name="Nakamura Y."/>
            <person name="Nagahari K."/>
            <person name="Murakami K."/>
            <person name="Yasuda T."/>
            <person name="Iwayanagi T."/>
            <person name="Wagatsuma M."/>
            <person name="Shiratori A."/>
            <person name="Sudo H."/>
            <person name="Hosoiri T."/>
            <person name="Kaku Y."/>
            <person name="Kodaira H."/>
            <person name="Kondo H."/>
            <person name="Sugawara M."/>
            <person name="Takahashi M."/>
            <person name="Kanda K."/>
            <person name="Yokoi T."/>
            <person name="Furuya T."/>
            <person name="Kikkawa E."/>
            <person name="Omura Y."/>
            <person name="Abe K."/>
            <person name="Kamihara K."/>
            <person name="Katsuta N."/>
            <person name="Sato K."/>
            <person name="Tanikawa M."/>
            <person name="Yamazaki M."/>
            <person name="Ninomiya K."/>
            <person name="Ishibashi T."/>
            <person name="Yamashita H."/>
            <person name="Murakawa K."/>
            <person name="Fujimori K."/>
            <person name="Tanai H."/>
            <person name="Kimata M."/>
            <person name="Watanabe M."/>
            <person name="Hiraoka S."/>
            <person name="Chiba Y."/>
            <person name="Ishida S."/>
            <person name="Ono Y."/>
            <person name="Takiguchi S."/>
            <person name="Watanabe S."/>
            <person name="Yosida M."/>
            <person name="Hotuta T."/>
            <person name="Kusano J."/>
            <person name="Kanehori K."/>
            <person name="Takahashi-Fujii A."/>
            <person name="Hara H."/>
            <person name="Tanase T.-O."/>
            <person name="Nomura Y."/>
            <person name="Togiya S."/>
            <person name="Komai F."/>
            <person name="Hara R."/>
            <person name="Takeuchi K."/>
            <person name="Arita M."/>
            <person name="Imose N."/>
            <person name="Musashino K."/>
            <person name="Yuuki H."/>
            <person name="Oshima A."/>
            <person name="Sasaki N."/>
            <person name="Aotsuka S."/>
            <person name="Yoshikawa Y."/>
            <person name="Matsunawa H."/>
            <person name="Ichihara T."/>
            <person name="Shiohata N."/>
            <person name="Sano S."/>
            <person name="Moriya S."/>
            <person name="Momiyama H."/>
            <person name="Satoh N."/>
            <person name="Takami S."/>
            <person name="Terashima Y."/>
            <person name="Suzuki O."/>
            <person name="Nakagawa S."/>
            <person name="Senoh A."/>
            <person name="Mizoguchi H."/>
            <person name="Goto Y."/>
            <person name="Shimizu F."/>
            <person name="Wakebe H."/>
            <person name="Hishigaki H."/>
            <person name="Watanabe T."/>
            <person name="Sugiyama A."/>
            <person name="Takemoto M."/>
            <person name="Kawakami B."/>
            <person name="Yamazaki M."/>
            <person name="Watanabe K."/>
            <person name="Kumagai A."/>
            <person name="Itakura S."/>
            <person name="Fukuzumi Y."/>
            <person name="Fujimori Y."/>
            <person name="Komiyama M."/>
            <person name="Tashiro H."/>
            <person name="Tanigami A."/>
            <person name="Fujiwara T."/>
            <person name="Ono T."/>
            <person name="Yamada K."/>
            <person name="Fujii Y."/>
            <person name="Ozaki K."/>
            <person name="Hirao M."/>
            <person name="Ohmori Y."/>
            <person name="Kawabata A."/>
            <person name="Hikiji T."/>
            <person name="Kobatake N."/>
            <person name="Inagaki H."/>
            <person name="Ikema Y."/>
            <person name="Okamoto S."/>
            <person name="Okitani R."/>
            <person name="Kawakami T."/>
            <person name="Noguchi S."/>
            <person name="Itoh T."/>
            <person name="Shigeta K."/>
            <person name="Senba T."/>
            <person name="Matsumura K."/>
            <person name="Nakajima Y."/>
            <person name="Mizuno T."/>
            <person name="Morinaga M."/>
            <person name="Sasaki M."/>
            <person name="Togashi T."/>
            <person name="Oyama M."/>
            <person name="Hata H."/>
            <person name="Watanabe M."/>
            <person name="Komatsu T."/>
            <person name="Mizushima-Sugano J."/>
            <person name="Satoh T."/>
            <person name="Shirai Y."/>
            <person name="Takahashi Y."/>
            <person name="Nakagawa K."/>
            <person name="Okumura K."/>
            <person name="Nagase T."/>
            <person name="Nomura N."/>
            <person name="Kikuchi H."/>
            <person name="Masuho Y."/>
            <person name="Yamashita R."/>
            <person name="Nakai K."/>
            <person name="Yada T."/>
            <person name="Nakamura Y."/>
            <person name="Ohara O."/>
            <person name="Isogai T."/>
            <person name="Sugano S."/>
        </authorList>
    </citation>
    <scope>NUCLEOTIDE SEQUENCE [LARGE SCALE MRNA] OF 1019-1634</scope>
    <source>
        <tissue>Fetal brain</tissue>
    </source>
</reference>
<protein>
    <recommendedName>
        <fullName>Leucine-rich repeat-containing protein 37A3</fullName>
    </recommendedName>
</protein>
<gene>
    <name type="primary">LRRC37A3</name>
    <name type="synonym">KIAA0563</name>
</gene>
<proteinExistence type="evidence at protein level"/>
<feature type="signal peptide" evidence="1">
    <location>
        <begin position="1"/>
        <end position="35"/>
    </location>
</feature>
<feature type="chain" id="PRO_0000076244" description="Leucine-rich repeat-containing protein 37A3">
    <location>
        <begin position="36"/>
        <end position="1634"/>
    </location>
</feature>
<feature type="topological domain" description="Extracellular" evidence="1">
    <location>
        <begin position="36"/>
        <end position="1581"/>
    </location>
</feature>
<feature type="transmembrane region" description="Helical" evidence="1">
    <location>
        <begin position="1582"/>
        <end position="1602"/>
    </location>
</feature>
<feature type="topological domain" description="Cytoplasmic" evidence="1">
    <location>
        <begin position="1603"/>
        <end position="1634"/>
    </location>
</feature>
<feature type="repeat" description="LRR 1">
    <location>
        <begin position="137"/>
        <end position="160"/>
    </location>
</feature>
<feature type="repeat" description="LRR 2">
    <location>
        <begin position="230"/>
        <end position="253"/>
    </location>
</feature>
<feature type="repeat" description="LRR 3">
    <location>
        <begin position="267"/>
        <end position="290"/>
    </location>
</feature>
<feature type="repeat" description="LRR 4">
    <location>
        <begin position="864"/>
        <end position="887"/>
    </location>
</feature>
<feature type="repeat" description="LRR 5">
    <location>
        <begin position="888"/>
        <end position="911"/>
    </location>
</feature>
<feature type="repeat" description="LRR 6">
    <location>
        <begin position="912"/>
        <end position="935"/>
    </location>
</feature>
<feature type="repeat" description="LRR 7">
    <location>
        <begin position="937"/>
        <end position="959"/>
    </location>
</feature>
<feature type="repeat" description="LRR 8">
    <location>
        <begin position="963"/>
        <end position="987"/>
    </location>
</feature>
<feature type="repeat" description="LRR 9">
    <location>
        <begin position="1002"/>
        <end position="1027"/>
    </location>
</feature>
<feature type="repeat" description="LRR 10">
    <location>
        <begin position="1124"/>
        <end position="1146"/>
    </location>
</feature>
<feature type="repeat" description="LRR 11">
    <location>
        <begin position="1151"/>
        <end position="1176"/>
    </location>
</feature>
<feature type="repeat" description="LRR 12">
    <location>
        <begin position="1359"/>
        <end position="1384"/>
    </location>
</feature>
<feature type="region of interest" description="Disordered" evidence="2">
    <location>
        <begin position="53"/>
        <end position="104"/>
    </location>
</feature>
<feature type="region of interest" description="Disordered" evidence="2">
    <location>
        <begin position="129"/>
        <end position="154"/>
    </location>
</feature>
<feature type="region of interest" description="Disordered" evidence="2">
    <location>
        <begin position="172"/>
        <end position="531"/>
    </location>
</feature>
<feature type="region of interest" description="Disordered" evidence="2">
    <location>
        <begin position="619"/>
        <end position="642"/>
    </location>
</feature>
<feature type="region of interest" description="Disordered" evidence="2">
    <location>
        <begin position="758"/>
        <end position="777"/>
    </location>
</feature>
<feature type="region of interest" description="Disordered" evidence="2">
    <location>
        <begin position="1181"/>
        <end position="1227"/>
    </location>
</feature>
<feature type="region of interest" description="Disordered" evidence="2">
    <location>
        <begin position="1306"/>
        <end position="1329"/>
    </location>
</feature>
<feature type="region of interest" description="Disordered" evidence="2">
    <location>
        <begin position="1614"/>
        <end position="1634"/>
    </location>
</feature>
<feature type="compositionally biased region" description="Polar residues" evidence="2">
    <location>
        <begin position="172"/>
        <end position="189"/>
    </location>
</feature>
<feature type="compositionally biased region" description="Polar residues" evidence="2">
    <location>
        <begin position="223"/>
        <end position="237"/>
    </location>
</feature>
<feature type="compositionally biased region" description="Low complexity" evidence="2">
    <location>
        <begin position="238"/>
        <end position="249"/>
    </location>
</feature>
<feature type="compositionally biased region" description="Polar residues" evidence="2">
    <location>
        <begin position="307"/>
        <end position="326"/>
    </location>
</feature>
<feature type="compositionally biased region" description="Low complexity" evidence="2">
    <location>
        <begin position="358"/>
        <end position="368"/>
    </location>
</feature>
<feature type="compositionally biased region" description="Polar residues" evidence="2">
    <location>
        <begin position="433"/>
        <end position="446"/>
    </location>
</feature>
<feature type="compositionally biased region" description="Low complexity" evidence="2">
    <location>
        <begin position="482"/>
        <end position="493"/>
    </location>
</feature>
<feature type="compositionally biased region" description="Polar residues" evidence="2">
    <location>
        <begin position="760"/>
        <end position="770"/>
    </location>
</feature>
<feature type="compositionally biased region" description="Basic and acidic residues" evidence="2">
    <location>
        <begin position="1181"/>
        <end position="1191"/>
    </location>
</feature>
<feature type="compositionally biased region" description="Basic and acidic residues" evidence="2">
    <location>
        <begin position="1201"/>
        <end position="1216"/>
    </location>
</feature>
<feature type="compositionally biased region" description="Acidic residues" evidence="2">
    <location>
        <begin position="1624"/>
        <end position="1634"/>
    </location>
</feature>
<feature type="glycosylation site" description="N-linked (GlcNAc...) asparagine" evidence="1">
    <location>
        <position position="296"/>
    </location>
</feature>
<feature type="glycosylation site" description="N-linked (GlcNAc...) asparagine" evidence="1">
    <location>
        <position position="1079"/>
    </location>
</feature>
<feature type="sequence variant" id="VAR_051088" description="In dbSNP:rs9893710.">
    <original>K</original>
    <variation>E</variation>
    <location>
        <position position="1215"/>
    </location>
</feature>
<feature type="sequence variant" id="VAR_061672" description="In dbSNP:rs28532307.">
    <original>G</original>
    <variation>A</variation>
    <location>
        <position position="1590"/>
    </location>
</feature>
<feature type="sequence conflict" description="In Ref. 3; AAH43145." evidence="3" ref="3">
    <original>S</original>
    <variation>P</variation>
    <location>
        <position position="51"/>
    </location>
</feature>
<feature type="sequence conflict" description="In Ref. 3; AAH43145." evidence="3" ref="3">
    <original>I</original>
    <variation>T</variation>
    <location>
        <position position="1086"/>
    </location>
</feature>
<feature type="sequence conflict" description="In Ref. 3; AAH43145." evidence="3" ref="3">
    <original>T</original>
    <variation>A</variation>
    <location>
        <position position="1417"/>
    </location>
</feature>
<feature type="sequence conflict" description="In Ref. 4; BAC03710." evidence="3" ref="4">
    <original>Y</original>
    <variation>H</variation>
    <location>
        <position position="1419"/>
    </location>
</feature>
<feature type="sequence conflict" description="In Ref. 4; BAC03710." evidence="3" ref="4">
    <original>S</original>
    <variation>P</variation>
    <location>
        <position position="1619"/>
    </location>
</feature>